<comment type="function">
    <text evidence="1">Catalyzes the interconversion of beta-pyran and beta-furan forms of D-ribose.</text>
</comment>
<comment type="catalytic activity">
    <reaction evidence="1">
        <text>beta-D-ribopyranose = beta-D-ribofuranose</text>
        <dbReference type="Rhea" id="RHEA:25432"/>
        <dbReference type="ChEBI" id="CHEBI:27476"/>
        <dbReference type="ChEBI" id="CHEBI:47002"/>
        <dbReference type="EC" id="5.4.99.62"/>
    </reaction>
</comment>
<comment type="pathway">
    <text evidence="1">Carbohydrate metabolism; D-ribose degradation; D-ribose 5-phosphate from beta-D-ribopyranose: step 1/2.</text>
</comment>
<comment type="subunit">
    <text evidence="1">Homodecamer.</text>
</comment>
<comment type="subcellular location">
    <subcellularLocation>
        <location evidence="1">Cytoplasm</location>
    </subcellularLocation>
</comment>
<comment type="similarity">
    <text evidence="1">Belongs to the RbsD / FucU family. RbsD subfamily.</text>
</comment>
<protein>
    <recommendedName>
        <fullName evidence="1">D-ribose pyranase</fullName>
        <ecNumber evidence="1">5.4.99.62</ecNumber>
    </recommendedName>
</protein>
<sequence>MKKNTLLNSELSYVIATLGHTDEITICDAGLPIPDASQRIDLALIQGIPTFIDTVKATLTEMQIEGVIVAEEFKTVSPQMHDELMTLIAAEEAQCSKSITVSYIPHEEFKIHTRESKAIVRTGECTPYANVIFQSGVVF</sequence>
<keyword id="KW-0119">Carbohydrate metabolism</keyword>
<keyword id="KW-0963">Cytoplasm</keyword>
<keyword id="KW-0413">Isomerase</keyword>
<keyword id="KW-1185">Reference proteome</keyword>
<name>RBSD_ALIF1</name>
<organism>
    <name type="scientific">Aliivibrio fischeri (strain ATCC 700601 / ES114)</name>
    <name type="common">Vibrio fischeri</name>
    <dbReference type="NCBI Taxonomy" id="312309"/>
    <lineage>
        <taxon>Bacteria</taxon>
        <taxon>Pseudomonadati</taxon>
        <taxon>Pseudomonadota</taxon>
        <taxon>Gammaproteobacteria</taxon>
        <taxon>Vibrionales</taxon>
        <taxon>Vibrionaceae</taxon>
        <taxon>Aliivibrio</taxon>
    </lineage>
</organism>
<evidence type="ECO:0000255" key="1">
    <source>
        <dbReference type="HAMAP-Rule" id="MF_01661"/>
    </source>
</evidence>
<reference key="1">
    <citation type="journal article" date="2005" name="Proc. Natl. Acad. Sci. U.S.A.">
        <title>Complete genome sequence of Vibrio fischeri: a symbiotic bacterium with pathogenic congeners.</title>
        <authorList>
            <person name="Ruby E.G."/>
            <person name="Urbanowski M."/>
            <person name="Campbell J."/>
            <person name="Dunn A."/>
            <person name="Faini M."/>
            <person name="Gunsalus R."/>
            <person name="Lostroh P."/>
            <person name="Lupp C."/>
            <person name="McCann J."/>
            <person name="Millikan D."/>
            <person name="Schaefer A."/>
            <person name="Stabb E."/>
            <person name="Stevens A."/>
            <person name="Visick K."/>
            <person name="Whistler C."/>
            <person name="Greenberg E.P."/>
        </authorList>
    </citation>
    <scope>NUCLEOTIDE SEQUENCE [LARGE SCALE GENOMIC DNA]</scope>
    <source>
        <strain>ATCC 700601 / ES114</strain>
    </source>
</reference>
<proteinExistence type="inferred from homology"/>
<feature type="chain" id="PRO_0000346295" description="D-ribose pyranase">
    <location>
        <begin position="1"/>
        <end position="139"/>
    </location>
</feature>
<feature type="active site" description="Proton donor" evidence="1">
    <location>
        <position position="20"/>
    </location>
</feature>
<feature type="binding site" evidence="1">
    <location>
        <position position="28"/>
    </location>
    <ligand>
        <name>substrate</name>
    </ligand>
</feature>
<feature type="binding site" evidence="1">
    <location>
        <position position="106"/>
    </location>
    <ligand>
        <name>substrate</name>
    </ligand>
</feature>
<feature type="binding site" evidence="1">
    <location>
        <begin position="128"/>
        <end position="130"/>
    </location>
    <ligand>
        <name>substrate</name>
    </ligand>
</feature>
<dbReference type="EC" id="5.4.99.62" evidence="1"/>
<dbReference type="EMBL" id="CP000020">
    <property type="protein sequence ID" value="AAW85939.1"/>
    <property type="molecule type" value="Genomic_DNA"/>
</dbReference>
<dbReference type="RefSeq" id="WP_011262034.1">
    <property type="nucleotide sequence ID" value="NC_006840.2"/>
</dbReference>
<dbReference type="RefSeq" id="YP_204827.1">
    <property type="nucleotide sequence ID" value="NC_006840.2"/>
</dbReference>
<dbReference type="SMR" id="Q5E4V7"/>
<dbReference type="STRING" id="312309.VF_1444"/>
<dbReference type="EnsemblBacteria" id="AAW85939">
    <property type="protein sequence ID" value="AAW85939"/>
    <property type="gene ID" value="VF_1444"/>
</dbReference>
<dbReference type="GeneID" id="54164119"/>
<dbReference type="KEGG" id="vfi:VF_1444"/>
<dbReference type="PATRIC" id="fig|312309.11.peg.1460"/>
<dbReference type="eggNOG" id="COG1869">
    <property type="taxonomic scope" value="Bacteria"/>
</dbReference>
<dbReference type="HOGENOM" id="CLU_135498_0_0_6"/>
<dbReference type="OrthoDB" id="9805009at2"/>
<dbReference type="UniPathway" id="UPA00916">
    <property type="reaction ID" value="UER00888"/>
</dbReference>
<dbReference type="Proteomes" id="UP000000537">
    <property type="component" value="Chromosome I"/>
</dbReference>
<dbReference type="GO" id="GO:0005829">
    <property type="term" value="C:cytosol"/>
    <property type="evidence" value="ECO:0007669"/>
    <property type="project" value="TreeGrafter"/>
</dbReference>
<dbReference type="GO" id="GO:0062193">
    <property type="term" value="F:D-ribose pyranase activity"/>
    <property type="evidence" value="ECO:0007669"/>
    <property type="project" value="UniProtKB-EC"/>
</dbReference>
<dbReference type="GO" id="GO:0016872">
    <property type="term" value="F:intramolecular lyase activity"/>
    <property type="evidence" value="ECO:0007669"/>
    <property type="project" value="UniProtKB-UniRule"/>
</dbReference>
<dbReference type="GO" id="GO:0048029">
    <property type="term" value="F:monosaccharide binding"/>
    <property type="evidence" value="ECO:0007669"/>
    <property type="project" value="InterPro"/>
</dbReference>
<dbReference type="GO" id="GO:0019303">
    <property type="term" value="P:D-ribose catabolic process"/>
    <property type="evidence" value="ECO:0007669"/>
    <property type="project" value="UniProtKB-UniRule"/>
</dbReference>
<dbReference type="Gene3D" id="3.40.1650.10">
    <property type="entry name" value="RbsD-like domain"/>
    <property type="match status" value="1"/>
</dbReference>
<dbReference type="HAMAP" id="MF_01661">
    <property type="entry name" value="D_rib_pyranase"/>
    <property type="match status" value="1"/>
</dbReference>
<dbReference type="InterPro" id="IPR023064">
    <property type="entry name" value="D-ribose_pyranase"/>
</dbReference>
<dbReference type="InterPro" id="IPR023750">
    <property type="entry name" value="RbsD-like_sf"/>
</dbReference>
<dbReference type="InterPro" id="IPR007721">
    <property type="entry name" value="RbsD_FucU"/>
</dbReference>
<dbReference type="NCBIfam" id="NF008761">
    <property type="entry name" value="PRK11797.1"/>
    <property type="match status" value="1"/>
</dbReference>
<dbReference type="PANTHER" id="PTHR37831">
    <property type="entry name" value="D-RIBOSE PYRANASE"/>
    <property type="match status" value="1"/>
</dbReference>
<dbReference type="PANTHER" id="PTHR37831:SF1">
    <property type="entry name" value="D-RIBOSE PYRANASE"/>
    <property type="match status" value="1"/>
</dbReference>
<dbReference type="Pfam" id="PF05025">
    <property type="entry name" value="RbsD_FucU"/>
    <property type="match status" value="1"/>
</dbReference>
<dbReference type="SUPFAM" id="SSF102546">
    <property type="entry name" value="RbsD-like"/>
    <property type="match status" value="1"/>
</dbReference>
<accession>Q5E4V7</accession>
<gene>
    <name evidence="1" type="primary">rbsD</name>
    <name type="ordered locus">VF_1444</name>
</gene>